<proteinExistence type="inferred from homology"/>
<organism>
    <name type="scientific">Solidesulfovibrio magneticus (strain ATCC 700980 / DSM 13731 / RS-1)</name>
    <name type="common">Desulfovibrio magneticus</name>
    <dbReference type="NCBI Taxonomy" id="573370"/>
    <lineage>
        <taxon>Bacteria</taxon>
        <taxon>Pseudomonadati</taxon>
        <taxon>Thermodesulfobacteriota</taxon>
        <taxon>Desulfovibrionia</taxon>
        <taxon>Desulfovibrionales</taxon>
        <taxon>Desulfovibrionaceae</taxon>
        <taxon>Solidesulfovibrio</taxon>
    </lineage>
</organism>
<protein>
    <recommendedName>
        <fullName evidence="1">Redox-sensing transcriptional repressor Rex</fullName>
    </recommendedName>
</protein>
<reference key="1">
    <citation type="journal article" date="2009" name="Genome Res.">
        <title>Whole genome sequence of Desulfovibrio magneticus strain RS-1 revealed common gene clusters in magnetotactic bacteria.</title>
        <authorList>
            <person name="Nakazawa H."/>
            <person name="Arakaki A."/>
            <person name="Narita-Yamada S."/>
            <person name="Yashiro I."/>
            <person name="Jinno K."/>
            <person name="Aoki N."/>
            <person name="Tsuruyama A."/>
            <person name="Okamura Y."/>
            <person name="Tanikawa S."/>
            <person name="Fujita N."/>
            <person name="Takeyama H."/>
            <person name="Matsunaga T."/>
        </authorList>
    </citation>
    <scope>NUCLEOTIDE SEQUENCE [LARGE SCALE GENOMIC DNA]</scope>
    <source>
        <strain>ATCC 700980 / DSM 13731 / RS-1</strain>
    </source>
</reference>
<keyword id="KW-0963">Cytoplasm</keyword>
<keyword id="KW-0238">DNA-binding</keyword>
<keyword id="KW-0520">NAD</keyword>
<keyword id="KW-0678">Repressor</keyword>
<keyword id="KW-0804">Transcription</keyword>
<keyword id="KW-0805">Transcription regulation</keyword>
<name>REX_SOLM1</name>
<sequence length="220" mass="24682">MKSEHIPKATIKRLAMYVQVLETLKREGSQVVSSELLARTCSVNPSQIRKDLAYFGEFGVRGVGYHVQDLIYSIKHSLGVDRVWKCALVGIGNLGKALLRHQDFKFRGFDIVGAFDCDPFKIGEEISGLEVVCTRRLKDAVKELGIEIGLITTPVNRAQRATNFLIEAGVKGIINYSPAMLTVPPDVYVEYVDFFHHFYSVAFSITLDRHQDRMGGDEDD</sequence>
<evidence type="ECO:0000255" key="1">
    <source>
        <dbReference type="HAMAP-Rule" id="MF_01131"/>
    </source>
</evidence>
<feature type="chain" id="PRO_1000213635" description="Redox-sensing transcriptional repressor Rex">
    <location>
        <begin position="1"/>
        <end position="220"/>
    </location>
</feature>
<feature type="DNA-binding region" description="H-T-H motif" evidence="1">
    <location>
        <begin position="16"/>
        <end position="55"/>
    </location>
</feature>
<feature type="binding site" evidence="1">
    <location>
        <begin position="90"/>
        <end position="95"/>
    </location>
    <ligand>
        <name>NAD(+)</name>
        <dbReference type="ChEBI" id="CHEBI:57540"/>
    </ligand>
</feature>
<accession>C4XQ09</accession>
<dbReference type="EMBL" id="AP010904">
    <property type="protein sequence ID" value="BAH77709.1"/>
    <property type="molecule type" value="Genomic_DNA"/>
</dbReference>
<dbReference type="RefSeq" id="WP_015862834.1">
    <property type="nucleotide sequence ID" value="NC_012796.1"/>
</dbReference>
<dbReference type="SMR" id="C4XQ09"/>
<dbReference type="STRING" id="573370.DMR_42180"/>
<dbReference type="KEGG" id="dma:DMR_42180"/>
<dbReference type="eggNOG" id="COG2344">
    <property type="taxonomic scope" value="Bacteria"/>
</dbReference>
<dbReference type="HOGENOM" id="CLU_061534_1_0_7"/>
<dbReference type="OrthoDB" id="9784760at2"/>
<dbReference type="Proteomes" id="UP000009071">
    <property type="component" value="Chromosome"/>
</dbReference>
<dbReference type="GO" id="GO:0005737">
    <property type="term" value="C:cytoplasm"/>
    <property type="evidence" value="ECO:0007669"/>
    <property type="project" value="UniProtKB-SubCell"/>
</dbReference>
<dbReference type="GO" id="GO:0003677">
    <property type="term" value="F:DNA binding"/>
    <property type="evidence" value="ECO:0007669"/>
    <property type="project" value="UniProtKB-UniRule"/>
</dbReference>
<dbReference type="GO" id="GO:0003700">
    <property type="term" value="F:DNA-binding transcription factor activity"/>
    <property type="evidence" value="ECO:0007669"/>
    <property type="project" value="UniProtKB-UniRule"/>
</dbReference>
<dbReference type="GO" id="GO:0045892">
    <property type="term" value="P:negative regulation of DNA-templated transcription"/>
    <property type="evidence" value="ECO:0007669"/>
    <property type="project" value="InterPro"/>
</dbReference>
<dbReference type="GO" id="GO:0051775">
    <property type="term" value="P:response to redox state"/>
    <property type="evidence" value="ECO:0007669"/>
    <property type="project" value="InterPro"/>
</dbReference>
<dbReference type="Gene3D" id="3.40.50.720">
    <property type="entry name" value="NAD(P)-binding Rossmann-like Domain"/>
    <property type="match status" value="1"/>
</dbReference>
<dbReference type="Gene3D" id="1.10.10.10">
    <property type="entry name" value="Winged helix-like DNA-binding domain superfamily/Winged helix DNA-binding domain"/>
    <property type="match status" value="1"/>
</dbReference>
<dbReference type="HAMAP" id="MF_01131">
    <property type="entry name" value="Rex"/>
    <property type="match status" value="1"/>
</dbReference>
<dbReference type="InterPro" id="IPR003781">
    <property type="entry name" value="CoA-bd"/>
</dbReference>
<dbReference type="InterPro" id="IPR036291">
    <property type="entry name" value="NAD(P)-bd_dom_sf"/>
</dbReference>
<dbReference type="InterPro" id="IPR009718">
    <property type="entry name" value="Rex_DNA-bd_C_dom"/>
</dbReference>
<dbReference type="InterPro" id="IPR022876">
    <property type="entry name" value="Tscrpt_rep_Rex"/>
</dbReference>
<dbReference type="InterPro" id="IPR036388">
    <property type="entry name" value="WH-like_DNA-bd_sf"/>
</dbReference>
<dbReference type="InterPro" id="IPR036390">
    <property type="entry name" value="WH_DNA-bd_sf"/>
</dbReference>
<dbReference type="NCBIfam" id="NF003992">
    <property type="entry name" value="PRK05472.2-1"/>
    <property type="match status" value="1"/>
</dbReference>
<dbReference type="NCBIfam" id="NF003993">
    <property type="entry name" value="PRK05472.2-2"/>
    <property type="match status" value="1"/>
</dbReference>
<dbReference type="NCBIfam" id="NF003994">
    <property type="entry name" value="PRK05472.2-3"/>
    <property type="match status" value="1"/>
</dbReference>
<dbReference type="NCBIfam" id="NF003995">
    <property type="entry name" value="PRK05472.2-4"/>
    <property type="match status" value="1"/>
</dbReference>
<dbReference type="NCBIfam" id="NF003996">
    <property type="entry name" value="PRK05472.2-5"/>
    <property type="match status" value="1"/>
</dbReference>
<dbReference type="PANTHER" id="PTHR35786">
    <property type="entry name" value="REDOX-SENSING TRANSCRIPTIONAL REPRESSOR REX"/>
    <property type="match status" value="1"/>
</dbReference>
<dbReference type="PANTHER" id="PTHR35786:SF1">
    <property type="entry name" value="REDOX-SENSING TRANSCRIPTIONAL REPRESSOR REX 1"/>
    <property type="match status" value="1"/>
</dbReference>
<dbReference type="Pfam" id="PF02629">
    <property type="entry name" value="CoA_binding"/>
    <property type="match status" value="1"/>
</dbReference>
<dbReference type="Pfam" id="PF06971">
    <property type="entry name" value="Put_DNA-bind_N"/>
    <property type="match status" value="1"/>
</dbReference>
<dbReference type="SMART" id="SM00881">
    <property type="entry name" value="CoA_binding"/>
    <property type="match status" value="1"/>
</dbReference>
<dbReference type="SUPFAM" id="SSF51735">
    <property type="entry name" value="NAD(P)-binding Rossmann-fold domains"/>
    <property type="match status" value="1"/>
</dbReference>
<dbReference type="SUPFAM" id="SSF46785">
    <property type="entry name" value="Winged helix' DNA-binding domain"/>
    <property type="match status" value="1"/>
</dbReference>
<comment type="function">
    <text evidence="1">Modulates transcription in response to changes in cellular NADH/NAD(+) redox state.</text>
</comment>
<comment type="subunit">
    <text evidence="1">Homodimer.</text>
</comment>
<comment type="subcellular location">
    <subcellularLocation>
        <location evidence="1">Cytoplasm</location>
    </subcellularLocation>
</comment>
<comment type="similarity">
    <text evidence="1">Belongs to the transcriptional regulatory Rex family.</text>
</comment>
<gene>
    <name evidence="1" type="primary">rex</name>
    <name type="ordered locus">DMR_42180</name>
</gene>